<dbReference type="EMBL" id="CH408044">
    <property type="protein sequence ID" value="EDV10419.1"/>
    <property type="molecule type" value="Genomic_DNA"/>
</dbReference>
<dbReference type="HOGENOM" id="CLU_036329_0_0_1"/>
<dbReference type="OrthoDB" id="5112at4893"/>
<dbReference type="Proteomes" id="UP000008335">
    <property type="component" value="Unassembled WGS sequence"/>
</dbReference>
<dbReference type="GO" id="GO:0032865">
    <property type="term" value="C:ERMES complex"/>
    <property type="evidence" value="ECO:0007669"/>
    <property type="project" value="UniProtKB-UniRule"/>
</dbReference>
<dbReference type="GO" id="GO:0008289">
    <property type="term" value="F:lipid binding"/>
    <property type="evidence" value="ECO:0007669"/>
    <property type="project" value="UniProtKB-KW"/>
</dbReference>
<dbReference type="GO" id="GO:0000002">
    <property type="term" value="P:mitochondrial genome maintenance"/>
    <property type="evidence" value="ECO:0007669"/>
    <property type="project" value="UniProtKB-UniRule"/>
</dbReference>
<dbReference type="GO" id="GO:1990456">
    <property type="term" value="P:mitochondrion-endoplasmic reticulum membrane tethering"/>
    <property type="evidence" value="ECO:0007669"/>
    <property type="project" value="TreeGrafter"/>
</dbReference>
<dbReference type="GO" id="GO:0015914">
    <property type="term" value="P:phospholipid transport"/>
    <property type="evidence" value="ECO:0007669"/>
    <property type="project" value="TreeGrafter"/>
</dbReference>
<dbReference type="CDD" id="cd21673">
    <property type="entry name" value="SMP_Mdm34"/>
    <property type="match status" value="1"/>
</dbReference>
<dbReference type="HAMAP" id="MF_03105">
    <property type="entry name" value="Mdm34"/>
    <property type="match status" value="1"/>
</dbReference>
<dbReference type="InterPro" id="IPR027536">
    <property type="entry name" value="Mdm34"/>
</dbReference>
<dbReference type="InterPro" id="IPR031468">
    <property type="entry name" value="SMP_LBD"/>
</dbReference>
<dbReference type="PANTHER" id="PTHR28185">
    <property type="entry name" value="MITOCHONDRIAL DISTRIBUTION AND MORPHOLOGY PROTEIN 34"/>
    <property type="match status" value="1"/>
</dbReference>
<dbReference type="PANTHER" id="PTHR28185:SF1">
    <property type="entry name" value="MITOCHONDRIAL DISTRIBUTION AND MORPHOLOGY PROTEIN 34"/>
    <property type="match status" value="1"/>
</dbReference>
<dbReference type="PROSITE" id="PS51847">
    <property type="entry name" value="SMP"/>
    <property type="match status" value="1"/>
</dbReference>
<gene>
    <name evidence="1" type="primary">MDM34</name>
    <name evidence="1" type="synonym">MMM2</name>
    <name type="ORF">SCRG_01203</name>
</gene>
<feature type="chain" id="PRO_0000384362" description="Mitochondrial distribution and morphology protein 34">
    <location>
        <begin position="1"/>
        <end position="459"/>
    </location>
</feature>
<feature type="domain" description="SMP-LTD" evidence="1">
    <location>
        <begin position="1"/>
        <end position="190"/>
    </location>
</feature>
<feature type="region of interest" description="Disordered" evidence="2">
    <location>
        <begin position="338"/>
        <end position="375"/>
    </location>
</feature>
<feature type="compositionally biased region" description="Basic and acidic residues" evidence="2">
    <location>
        <begin position="338"/>
        <end position="347"/>
    </location>
</feature>
<feature type="compositionally biased region" description="Basic residues" evidence="2">
    <location>
        <begin position="348"/>
        <end position="359"/>
    </location>
</feature>
<accession>B3LHR1</accession>
<reference key="1">
    <citation type="submission" date="2005-03" db="EMBL/GenBank/DDBJ databases">
        <title>Annotation of the Saccharomyces cerevisiae RM11-1a genome.</title>
        <authorList>
            <consortium name="The Broad Institute Genome Sequencing Platform"/>
            <person name="Birren B.W."/>
            <person name="Lander E.S."/>
            <person name="Galagan J.E."/>
            <person name="Nusbaum C."/>
            <person name="Devon K."/>
            <person name="Cuomo C."/>
            <person name="Jaffe D.B."/>
            <person name="Butler J."/>
            <person name="Alvarez P."/>
            <person name="Gnerre S."/>
            <person name="Grabherr M."/>
            <person name="Kleber M."/>
            <person name="Mauceli E.W."/>
            <person name="Brockman W."/>
            <person name="MacCallum I.A."/>
            <person name="Rounsley S."/>
            <person name="Young S.K."/>
            <person name="LaButti K."/>
            <person name="Pushparaj V."/>
            <person name="DeCaprio D."/>
            <person name="Crawford M."/>
            <person name="Koehrsen M."/>
            <person name="Engels R."/>
            <person name="Montgomery P."/>
            <person name="Pearson M."/>
            <person name="Howarth C."/>
            <person name="Larson L."/>
            <person name="Luoma S."/>
            <person name="White J."/>
            <person name="O'Leary S."/>
            <person name="Kodira C.D."/>
            <person name="Zeng Q."/>
            <person name="Yandava C."/>
            <person name="Alvarado L."/>
            <person name="Pratt S."/>
            <person name="Kruglyak L."/>
        </authorList>
    </citation>
    <scope>NUCLEOTIDE SEQUENCE [LARGE SCALE GENOMIC DNA]</scope>
    <source>
        <strain>RM11-1a</strain>
    </source>
</reference>
<protein>
    <recommendedName>
        <fullName evidence="1">Mitochondrial distribution and morphology protein 34</fullName>
    </recommendedName>
    <alternativeName>
        <fullName evidence="1">Mitochondrial outer membrane protein MMM2</fullName>
    </alternativeName>
</protein>
<comment type="function">
    <text evidence="1">Component of the ERMES/MDM complex, which serves as a molecular tether to connect the endoplasmic reticulum (ER) and mitochondria. Components of this complex are involved in the control of mitochondrial shape and protein biogenesis, and function in nonvesicular lipid trafficking between the ER and mitochondria. MDM34 is required for the interaction of the ER-resident membrane protein MMM1 and the outer mitochondrial membrane-resident beta-barrel protein MDM10.</text>
</comment>
<comment type="subunit">
    <text evidence="1">Component of the ER-mitochondria encounter structure (ERMES) or MDM complex, composed of MMM1, MDM10, MDM12 and MDM34.</text>
</comment>
<comment type="subcellular location">
    <subcellularLocation>
        <location evidence="1">Mitochondrion outer membrane</location>
        <topology evidence="1">Multi-pass membrane protein</topology>
    </subcellularLocation>
    <text evidence="1">The ERMES/MDM complex localizes to a few discrete foci (around 10 per single cell), that represent mitochondria-endoplasmic reticulum junctions. These foci are often found next to mtDNA nucleoids.</text>
</comment>
<comment type="domain">
    <text evidence="1">Lacks alpha-helical transmembrane segments, suggesting that it resides in the membrane via beta-sheet conformations similar to those predicted for other outer membrane proteins and porin.</text>
</comment>
<comment type="domain">
    <text evidence="1">The SMP-LTD domain is a barrel-like domain that can bind various types of glycerophospholipids in its interior and mediate their transfer between two adjacent bilayers.</text>
</comment>
<comment type="PTM">
    <text evidence="1">Ubiquitinated by a SCF (SKP1-CUL1-F-box protein) E3 ubiquitin-protein ligase complex containing the F-box protein MDM30. Ubiquitination is important for mitochondrial integrity.</text>
</comment>
<comment type="similarity">
    <text evidence="1">Belongs to the MDM34 family.</text>
</comment>
<name>MDM34_YEAS1</name>
<organism>
    <name type="scientific">Saccharomyces cerevisiae (strain RM11-1a)</name>
    <name type="common">Baker's yeast</name>
    <dbReference type="NCBI Taxonomy" id="285006"/>
    <lineage>
        <taxon>Eukaryota</taxon>
        <taxon>Fungi</taxon>
        <taxon>Dikarya</taxon>
        <taxon>Ascomycota</taxon>
        <taxon>Saccharomycotina</taxon>
        <taxon>Saccharomycetes</taxon>
        <taxon>Saccharomycetales</taxon>
        <taxon>Saccharomycetaceae</taxon>
        <taxon>Saccharomyces</taxon>
    </lineage>
</organism>
<sequence>MSFRFNEAVFGDNSFNERVREKLSTALNSPSKKKLDILKSGIKVQKVDFPTIPQLEILDLDIITQPKSLAKGICKISCKDAMLRIQTVIESNLLLISEQDTPSFTMPQLINNGSFTIPITMTFSSIELEAITNIFVKNPGIGISFNDVDLDFKFDCSVKILQSTIERRLKESMHVVFKDVLPSLIFNTSQNWFTNRGESTSTIPGKREHHHQQTTMSRNVILDGSDFQELSPINMLRLSSIVSSRSTLSLHSTVMNSLSAIPGCLERQNLYRFISRMPSLNNYYSSQSFPQPKSSTVSSKQLVKPFYCSHNLLPKTVLDSSQYDLATITKIQSRLFDRSNSNDDNAKPRRRKIKCKKTRTPSNLQSQGEQAVDDSTAIETVTSTPVQTPIPELEEQSPPYLKTTVSIRDKYVIPEKISLNLDSKKDTSKKKPFYFIGLNSQEPSNNWKWGMEDSPPPYH</sequence>
<proteinExistence type="inferred from homology"/>
<keyword id="KW-0445">Lipid transport</keyword>
<keyword id="KW-0446">Lipid-binding</keyword>
<keyword id="KW-0472">Membrane</keyword>
<keyword id="KW-0496">Mitochondrion</keyword>
<keyword id="KW-1000">Mitochondrion outer membrane</keyword>
<keyword id="KW-0812">Transmembrane</keyword>
<keyword id="KW-1134">Transmembrane beta strand</keyword>
<keyword id="KW-0813">Transport</keyword>
<keyword id="KW-0832">Ubl conjugation</keyword>
<evidence type="ECO:0000255" key="1">
    <source>
        <dbReference type="HAMAP-Rule" id="MF_03105"/>
    </source>
</evidence>
<evidence type="ECO:0000256" key="2">
    <source>
        <dbReference type="SAM" id="MobiDB-lite"/>
    </source>
</evidence>